<reference key="1">
    <citation type="journal article" date="2009" name="PLoS Genet.">
        <title>Organised genome dynamics in the Escherichia coli species results in highly diverse adaptive paths.</title>
        <authorList>
            <person name="Touchon M."/>
            <person name="Hoede C."/>
            <person name="Tenaillon O."/>
            <person name="Barbe V."/>
            <person name="Baeriswyl S."/>
            <person name="Bidet P."/>
            <person name="Bingen E."/>
            <person name="Bonacorsi S."/>
            <person name="Bouchier C."/>
            <person name="Bouvet O."/>
            <person name="Calteau A."/>
            <person name="Chiapello H."/>
            <person name="Clermont O."/>
            <person name="Cruveiller S."/>
            <person name="Danchin A."/>
            <person name="Diard M."/>
            <person name="Dossat C."/>
            <person name="Karoui M.E."/>
            <person name="Frapy E."/>
            <person name="Garry L."/>
            <person name="Ghigo J.M."/>
            <person name="Gilles A.M."/>
            <person name="Johnson J."/>
            <person name="Le Bouguenec C."/>
            <person name="Lescat M."/>
            <person name="Mangenot S."/>
            <person name="Martinez-Jehanne V."/>
            <person name="Matic I."/>
            <person name="Nassif X."/>
            <person name="Oztas S."/>
            <person name="Petit M.A."/>
            <person name="Pichon C."/>
            <person name="Rouy Z."/>
            <person name="Ruf C.S."/>
            <person name="Schneider D."/>
            <person name="Tourret J."/>
            <person name="Vacherie B."/>
            <person name="Vallenet D."/>
            <person name="Medigue C."/>
            <person name="Rocha E.P.C."/>
            <person name="Denamur E."/>
        </authorList>
    </citation>
    <scope>NUCLEOTIDE SEQUENCE [LARGE SCALE GENOMIC DNA]</scope>
    <source>
        <strain>IAI1</strain>
    </source>
</reference>
<proteinExistence type="inferred from homology"/>
<name>NUOH_ECO8A</name>
<evidence type="ECO:0000255" key="1">
    <source>
        <dbReference type="HAMAP-Rule" id="MF_01350"/>
    </source>
</evidence>
<comment type="function">
    <text evidence="1">NDH-1 shuttles electrons from NADH, via FMN and iron-sulfur (Fe-S) centers, to quinones in the respiratory chain. The immediate electron acceptor for the enzyme in this species is believed to be ubiquinone. Couples the redox reaction to proton translocation (for every two electrons transferred, four hydrogen ions are translocated across the cytoplasmic membrane), and thus conserves the redox energy in a proton gradient. This subunit may bind ubiquinone.</text>
</comment>
<comment type="catalytic activity">
    <reaction evidence="1">
        <text>a quinone + NADH + 5 H(+)(in) = a quinol + NAD(+) + 4 H(+)(out)</text>
        <dbReference type="Rhea" id="RHEA:57888"/>
        <dbReference type="ChEBI" id="CHEBI:15378"/>
        <dbReference type="ChEBI" id="CHEBI:24646"/>
        <dbReference type="ChEBI" id="CHEBI:57540"/>
        <dbReference type="ChEBI" id="CHEBI:57945"/>
        <dbReference type="ChEBI" id="CHEBI:132124"/>
    </reaction>
</comment>
<comment type="subunit">
    <text evidence="1">NDH-1 is composed of 13 different subunits. Subunits NuoA, H, J, K, L, M, N constitute the membrane sector of the complex.</text>
</comment>
<comment type="subcellular location">
    <subcellularLocation>
        <location evidence="1">Cell inner membrane</location>
        <topology evidence="1">Multi-pass membrane protein</topology>
    </subcellularLocation>
</comment>
<comment type="similarity">
    <text evidence="1">Belongs to the complex I subunit 1 family.</text>
</comment>
<accession>B7M5W1</accession>
<organism>
    <name type="scientific">Escherichia coli O8 (strain IAI1)</name>
    <dbReference type="NCBI Taxonomy" id="585034"/>
    <lineage>
        <taxon>Bacteria</taxon>
        <taxon>Pseudomonadati</taxon>
        <taxon>Pseudomonadota</taxon>
        <taxon>Gammaproteobacteria</taxon>
        <taxon>Enterobacterales</taxon>
        <taxon>Enterobacteriaceae</taxon>
        <taxon>Escherichia</taxon>
    </lineage>
</organism>
<feature type="chain" id="PRO_1000143593" description="NADH-quinone oxidoreductase subunit H">
    <location>
        <begin position="1"/>
        <end position="325"/>
    </location>
</feature>
<feature type="transmembrane region" description="Helical" evidence="1">
    <location>
        <begin position="11"/>
        <end position="31"/>
    </location>
</feature>
<feature type="transmembrane region" description="Helical" evidence="1">
    <location>
        <begin position="81"/>
        <end position="101"/>
    </location>
</feature>
<feature type="transmembrane region" description="Helical" evidence="1">
    <location>
        <begin position="114"/>
        <end position="134"/>
    </location>
</feature>
<feature type="transmembrane region" description="Helical" evidence="1">
    <location>
        <begin position="154"/>
        <end position="174"/>
    </location>
</feature>
<feature type="transmembrane region" description="Helical" evidence="1">
    <location>
        <begin position="186"/>
        <end position="206"/>
    </location>
</feature>
<feature type="transmembrane region" description="Helical" evidence="1">
    <location>
        <begin position="237"/>
        <end position="257"/>
    </location>
</feature>
<feature type="transmembrane region" description="Helical" evidence="1">
    <location>
        <begin position="265"/>
        <end position="285"/>
    </location>
</feature>
<feature type="transmembrane region" description="Helical" evidence="1">
    <location>
        <begin position="304"/>
        <end position="324"/>
    </location>
</feature>
<protein>
    <recommendedName>
        <fullName evidence="1">NADH-quinone oxidoreductase subunit H</fullName>
        <ecNumber evidence="1">7.1.1.-</ecNumber>
    </recommendedName>
    <alternativeName>
        <fullName evidence="1">NADH dehydrogenase I subunit H</fullName>
    </alternativeName>
    <alternativeName>
        <fullName evidence="1">NDH-1 subunit H</fullName>
    </alternativeName>
</protein>
<sequence length="325" mass="36219">MSWISPELIEILLTILKAVVILLVVVTCGAFMSFGERRLLGLFQNRYGPNRVGWGGSLQLVADMIKMFFKEDWIPKFSDRVIFTLAPMIAFTSLLLAFAIVPVSPGWVVADLNIGILFFLMMAGLAVYAVLFAGWSSNNKYSLLGAMRASAQTLSYEVFLGLSLMGVVAQAGSFNMTDIVNSQAHVWNVIPQFFGFITFAIAGVAVCHRHPFDQPEAEQELADGYHIEYSGMKFGLFFVGEYIGIVTISALMVTLFFGGWQGPLLPPFIWFALKTAFFMMMFILIRASLPRPRYDQVMSFGWKICLPLTLINLLVTAAVILWQAQ</sequence>
<gene>
    <name evidence="1" type="primary">nuoH</name>
    <name type="ordered locus">ECIAI1_2356</name>
</gene>
<keyword id="KW-0997">Cell inner membrane</keyword>
<keyword id="KW-1003">Cell membrane</keyword>
<keyword id="KW-0472">Membrane</keyword>
<keyword id="KW-0520">NAD</keyword>
<keyword id="KW-0874">Quinone</keyword>
<keyword id="KW-1278">Translocase</keyword>
<keyword id="KW-0812">Transmembrane</keyword>
<keyword id="KW-1133">Transmembrane helix</keyword>
<keyword id="KW-0830">Ubiquinone</keyword>
<dbReference type="EC" id="7.1.1.-" evidence="1"/>
<dbReference type="EMBL" id="CU928160">
    <property type="protein sequence ID" value="CAQ99198.1"/>
    <property type="molecule type" value="Genomic_DNA"/>
</dbReference>
<dbReference type="RefSeq" id="WP_000118507.1">
    <property type="nucleotide sequence ID" value="NC_011741.1"/>
</dbReference>
<dbReference type="SMR" id="B7M5W1"/>
<dbReference type="GeneID" id="93774892"/>
<dbReference type="KEGG" id="ecr:ECIAI1_2356"/>
<dbReference type="HOGENOM" id="CLU_015134_0_1_6"/>
<dbReference type="GO" id="GO:0005886">
    <property type="term" value="C:plasma membrane"/>
    <property type="evidence" value="ECO:0007669"/>
    <property type="project" value="UniProtKB-SubCell"/>
</dbReference>
<dbReference type="GO" id="GO:0003954">
    <property type="term" value="F:NADH dehydrogenase activity"/>
    <property type="evidence" value="ECO:0007669"/>
    <property type="project" value="TreeGrafter"/>
</dbReference>
<dbReference type="GO" id="GO:0016655">
    <property type="term" value="F:oxidoreductase activity, acting on NAD(P)H, quinone or similar compound as acceptor"/>
    <property type="evidence" value="ECO:0007669"/>
    <property type="project" value="UniProtKB-UniRule"/>
</dbReference>
<dbReference type="GO" id="GO:0048038">
    <property type="term" value="F:quinone binding"/>
    <property type="evidence" value="ECO:0007669"/>
    <property type="project" value="UniProtKB-KW"/>
</dbReference>
<dbReference type="GO" id="GO:0009060">
    <property type="term" value="P:aerobic respiration"/>
    <property type="evidence" value="ECO:0007669"/>
    <property type="project" value="TreeGrafter"/>
</dbReference>
<dbReference type="HAMAP" id="MF_01350">
    <property type="entry name" value="NDH1_NuoH"/>
    <property type="match status" value="1"/>
</dbReference>
<dbReference type="InterPro" id="IPR001694">
    <property type="entry name" value="NADH_UbQ_OxRdtase_su1/FPO"/>
</dbReference>
<dbReference type="InterPro" id="IPR018086">
    <property type="entry name" value="NADH_UbQ_OxRdtase_su1_CS"/>
</dbReference>
<dbReference type="NCBIfam" id="NF004740">
    <property type="entry name" value="PRK06076.1-1"/>
    <property type="match status" value="1"/>
</dbReference>
<dbReference type="NCBIfam" id="NF004741">
    <property type="entry name" value="PRK06076.1-2"/>
    <property type="match status" value="1"/>
</dbReference>
<dbReference type="PANTHER" id="PTHR11432">
    <property type="entry name" value="NADH DEHYDROGENASE SUBUNIT 1"/>
    <property type="match status" value="1"/>
</dbReference>
<dbReference type="PANTHER" id="PTHR11432:SF3">
    <property type="entry name" value="NADH-UBIQUINONE OXIDOREDUCTASE CHAIN 1"/>
    <property type="match status" value="1"/>
</dbReference>
<dbReference type="Pfam" id="PF00146">
    <property type="entry name" value="NADHdh"/>
    <property type="match status" value="1"/>
</dbReference>
<dbReference type="PROSITE" id="PS00667">
    <property type="entry name" value="COMPLEX1_ND1_1"/>
    <property type="match status" value="1"/>
</dbReference>
<dbReference type="PROSITE" id="PS00668">
    <property type="entry name" value="COMPLEX1_ND1_2"/>
    <property type="match status" value="1"/>
</dbReference>